<comment type="function">
    <text evidence="1">Cleaves 'Lys-63'-linked poly-ubiquitin chains, and with lesser efficiency 'Lys-48'-linked poly-ubiquitin chains (in vitro). May act as a deubiquitinating enzyme (By similarity).</text>
</comment>
<comment type="catalytic activity">
    <reaction>
        <text>Thiol-dependent hydrolysis of ester, thioester, amide, peptide and isopeptide bonds formed by the C-terminal Gly of ubiquitin (a 76-residue protein attached to proteins as an intracellular targeting signal).</text>
        <dbReference type="EC" id="3.4.19.12"/>
    </reaction>
</comment>
<comment type="subcellular location">
    <subcellularLocation>
        <location evidence="1">Cytoplasm</location>
        <location evidence="1">Cytosol</location>
    </subcellularLocation>
</comment>
<gene>
    <name type="primary">Josd2</name>
</gene>
<sequence length="188" mass="20776">MSQAPEARPSPPSVYHERQRLELCAVHALNNVLQEQLFSQEAADEICKRLAPDSRLNPHRSLLGTGNYDVNVIMAALQGLGLAAVWWDRRRPLSQLALPQVLGLILNLPSPVSLGLLSLPLRRRHWVALRQVDGIYYNLDSKLRAPEALGDEDGVRTFLAAALAQGLCEVLLVVTKEVEEAGCWLNTS</sequence>
<accession>Q9CR30</accession>
<organism>
    <name type="scientific">Mus musculus</name>
    <name type="common">Mouse</name>
    <dbReference type="NCBI Taxonomy" id="10090"/>
    <lineage>
        <taxon>Eukaryota</taxon>
        <taxon>Metazoa</taxon>
        <taxon>Chordata</taxon>
        <taxon>Craniata</taxon>
        <taxon>Vertebrata</taxon>
        <taxon>Euteleostomi</taxon>
        <taxon>Mammalia</taxon>
        <taxon>Eutheria</taxon>
        <taxon>Euarchontoglires</taxon>
        <taxon>Glires</taxon>
        <taxon>Rodentia</taxon>
        <taxon>Myomorpha</taxon>
        <taxon>Muroidea</taxon>
        <taxon>Muridae</taxon>
        <taxon>Murinae</taxon>
        <taxon>Mus</taxon>
        <taxon>Mus</taxon>
    </lineage>
</organism>
<evidence type="ECO:0000250" key="1"/>
<evidence type="ECO:0000255" key="2">
    <source>
        <dbReference type="PROSITE-ProRule" id="PRU00331"/>
    </source>
</evidence>
<dbReference type="EC" id="3.4.19.12"/>
<dbReference type="EMBL" id="AK003525">
    <property type="protein sequence ID" value="BAB22837.1"/>
    <property type="molecule type" value="mRNA"/>
</dbReference>
<dbReference type="EMBL" id="AK002872">
    <property type="protein sequence ID" value="BAB22420.1"/>
    <property type="molecule type" value="mRNA"/>
</dbReference>
<dbReference type="CCDS" id="CCDS21208.1"/>
<dbReference type="RefSeq" id="NP_001191999.1">
    <property type="nucleotide sequence ID" value="NM_001205070.1"/>
</dbReference>
<dbReference type="RefSeq" id="NP_001192000.1">
    <property type="nucleotide sequence ID" value="NM_001205071.1"/>
</dbReference>
<dbReference type="RefSeq" id="NP_001192001.1">
    <property type="nucleotide sequence ID" value="NM_001205072.1"/>
</dbReference>
<dbReference type="RefSeq" id="NP_001192002.1">
    <property type="nucleotide sequence ID" value="NM_001205073.1"/>
</dbReference>
<dbReference type="RefSeq" id="NP_079644.1">
    <property type="nucleotide sequence ID" value="NM_025368.4"/>
</dbReference>
<dbReference type="RefSeq" id="XP_006541137.1">
    <property type="nucleotide sequence ID" value="XM_006541074.2"/>
</dbReference>
<dbReference type="RefSeq" id="XP_030098747.1">
    <property type="nucleotide sequence ID" value="XM_030242887.1"/>
</dbReference>
<dbReference type="RefSeq" id="XP_036009235.1">
    <property type="nucleotide sequence ID" value="XM_036153342.1"/>
</dbReference>
<dbReference type="RefSeq" id="XP_036009236.1">
    <property type="nucleotide sequence ID" value="XM_036153343.1"/>
</dbReference>
<dbReference type="RefSeq" id="XP_036009237.1">
    <property type="nucleotide sequence ID" value="XM_036153344.1"/>
</dbReference>
<dbReference type="RefSeq" id="XP_036009238.1">
    <property type="nucleotide sequence ID" value="XM_036153345.1"/>
</dbReference>
<dbReference type="SMR" id="Q9CR30"/>
<dbReference type="BioGRID" id="211232">
    <property type="interactions" value="1"/>
</dbReference>
<dbReference type="FunCoup" id="Q9CR30">
    <property type="interactions" value="31"/>
</dbReference>
<dbReference type="STRING" id="10090.ENSMUSP00000048415"/>
<dbReference type="MEROPS" id="C86.005"/>
<dbReference type="PhosphoSitePlus" id="Q9CR30"/>
<dbReference type="PaxDb" id="10090-ENSMUSP00000048415"/>
<dbReference type="ProteomicsDB" id="269124"/>
<dbReference type="Pumba" id="Q9CR30"/>
<dbReference type="Antibodypedia" id="53685">
    <property type="antibodies" value="80 antibodies from 19 providers"/>
</dbReference>
<dbReference type="DNASU" id="66124"/>
<dbReference type="Ensembl" id="ENSMUST00000035844.11">
    <property type="protein sequence ID" value="ENSMUSP00000048415.5"/>
    <property type="gene ID" value="ENSMUSG00000038695.14"/>
</dbReference>
<dbReference type="Ensembl" id="ENSMUST00000117324.8">
    <property type="protein sequence ID" value="ENSMUSP00000113313.2"/>
    <property type="gene ID" value="ENSMUSG00000038695.14"/>
</dbReference>
<dbReference type="Ensembl" id="ENSMUST00000118493.8">
    <property type="protein sequence ID" value="ENSMUSP00000113226.2"/>
    <property type="gene ID" value="ENSMUSG00000038695.14"/>
</dbReference>
<dbReference type="Ensembl" id="ENSMUST00000118628.8">
    <property type="protein sequence ID" value="ENSMUSP00000113172.2"/>
    <property type="gene ID" value="ENSMUSG00000038695.14"/>
</dbReference>
<dbReference type="Ensembl" id="ENSMUST00000120852.8">
    <property type="protein sequence ID" value="ENSMUSP00000114105.2"/>
    <property type="gene ID" value="ENSMUSG00000038695.14"/>
</dbReference>
<dbReference type="GeneID" id="66124"/>
<dbReference type="KEGG" id="mmu:66124"/>
<dbReference type="UCSC" id="uc009gpl.2">
    <property type="organism name" value="mouse"/>
</dbReference>
<dbReference type="AGR" id="MGI:1913374"/>
<dbReference type="CTD" id="126119"/>
<dbReference type="MGI" id="MGI:1913374">
    <property type="gene designation" value="Josd2"/>
</dbReference>
<dbReference type="VEuPathDB" id="HostDB:ENSMUSG00000038695"/>
<dbReference type="eggNOG" id="KOG2934">
    <property type="taxonomic scope" value="Eukaryota"/>
</dbReference>
<dbReference type="GeneTree" id="ENSGT00390000009228"/>
<dbReference type="HOGENOM" id="CLU_103892_0_0_1"/>
<dbReference type="InParanoid" id="Q9CR30"/>
<dbReference type="OMA" id="QRNCEAV"/>
<dbReference type="OrthoDB" id="422700at2759"/>
<dbReference type="PhylomeDB" id="Q9CR30"/>
<dbReference type="TreeFam" id="TF313660"/>
<dbReference type="Reactome" id="R-MMU-5689877">
    <property type="pathway name" value="Josephin domain DUBs"/>
</dbReference>
<dbReference type="BioGRID-ORCS" id="66124">
    <property type="hits" value="3 hits in 77 CRISPR screens"/>
</dbReference>
<dbReference type="ChiTaRS" id="Josd2">
    <property type="organism name" value="mouse"/>
</dbReference>
<dbReference type="PRO" id="PR:Q9CR30"/>
<dbReference type="Proteomes" id="UP000000589">
    <property type="component" value="Chromosome 7"/>
</dbReference>
<dbReference type="RNAct" id="Q9CR30">
    <property type="molecule type" value="protein"/>
</dbReference>
<dbReference type="Bgee" id="ENSMUSG00000038695">
    <property type="expression patterns" value="Expressed in bone marrow and 64 other cell types or tissues"/>
</dbReference>
<dbReference type="ExpressionAtlas" id="Q9CR30">
    <property type="expression patterns" value="baseline and differential"/>
</dbReference>
<dbReference type="GO" id="GO:0005737">
    <property type="term" value="C:cytoplasm"/>
    <property type="evidence" value="ECO:0000314"/>
    <property type="project" value="MGI"/>
</dbReference>
<dbReference type="GO" id="GO:0005829">
    <property type="term" value="C:cytosol"/>
    <property type="evidence" value="ECO:0007669"/>
    <property type="project" value="UniProtKB-SubCell"/>
</dbReference>
<dbReference type="GO" id="GO:0004843">
    <property type="term" value="F:cysteine-type deubiquitinase activity"/>
    <property type="evidence" value="ECO:0007669"/>
    <property type="project" value="UniProtKB-EC"/>
</dbReference>
<dbReference type="GO" id="GO:0101005">
    <property type="term" value="F:deubiquitinase activity"/>
    <property type="evidence" value="ECO:0000314"/>
    <property type="project" value="MGI"/>
</dbReference>
<dbReference type="GO" id="GO:0016579">
    <property type="term" value="P:protein deubiquitination"/>
    <property type="evidence" value="ECO:0000314"/>
    <property type="project" value="MGI"/>
</dbReference>
<dbReference type="GO" id="GO:0006508">
    <property type="term" value="P:proteolysis"/>
    <property type="evidence" value="ECO:0007669"/>
    <property type="project" value="UniProtKB-KW"/>
</dbReference>
<dbReference type="FunFam" id="3.90.70.40:FF:000003">
    <property type="entry name" value="josephin-2 isoform X1"/>
    <property type="match status" value="1"/>
</dbReference>
<dbReference type="Gene3D" id="3.90.70.40">
    <property type="match status" value="1"/>
</dbReference>
<dbReference type="InterPro" id="IPR040053">
    <property type="entry name" value="JOSD1/2"/>
</dbReference>
<dbReference type="InterPro" id="IPR006155">
    <property type="entry name" value="Josephin"/>
</dbReference>
<dbReference type="PANTHER" id="PTHR13291">
    <property type="entry name" value="JOSEPHIN 1, 2"/>
    <property type="match status" value="1"/>
</dbReference>
<dbReference type="PANTHER" id="PTHR13291:SF2">
    <property type="entry name" value="JOSEPHIN-2"/>
    <property type="match status" value="1"/>
</dbReference>
<dbReference type="Pfam" id="PF02099">
    <property type="entry name" value="Josephin"/>
    <property type="match status" value="1"/>
</dbReference>
<dbReference type="PRINTS" id="PR01233">
    <property type="entry name" value="JOSEPHIN"/>
</dbReference>
<dbReference type="SMART" id="SM01246">
    <property type="entry name" value="Josephin"/>
    <property type="match status" value="1"/>
</dbReference>
<dbReference type="PROSITE" id="PS50957">
    <property type="entry name" value="JOSEPHIN"/>
    <property type="match status" value="1"/>
</dbReference>
<proteinExistence type="evidence at protein level"/>
<keyword id="KW-0963">Cytoplasm</keyword>
<keyword id="KW-0378">Hydrolase</keyword>
<keyword id="KW-0645">Protease</keyword>
<keyword id="KW-1185">Reference proteome</keyword>
<keyword id="KW-0833">Ubl conjugation pathway</keyword>
<name>JOS2_MOUSE</name>
<reference key="1">
    <citation type="journal article" date="2005" name="Science">
        <title>The transcriptional landscape of the mammalian genome.</title>
        <authorList>
            <person name="Carninci P."/>
            <person name="Kasukawa T."/>
            <person name="Katayama S."/>
            <person name="Gough J."/>
            <person name="Frith M.C."/>
            <person name="Maeda N."/>
            <person name="Oyama R."/>
            <person name="Ravasi T."/>
            <person name="Lenhard B."/>
            <person name="Wells C."/>
            <person name="Kodzius R."/>
            <person name="Shimokawa K."/>
            <person name="Bajic V.B."/>
            <person name="Brenner S.E."/>
            <person name="Batalov S."/>
            <person name="Forrest A.R."/>
            <person name="Zavolan M."/>
            <person name="Davis M.J."/>
            <person name="Wilming L.G."/>
            <person name="Aidinis V."/>
            <person name="Allen J.E."/>
            <person name="Ambesi-Impiombato A."/>
            <person name="Apweiler R."/>
            <person name="Aturaliya R.N."/>
            <person name="Bailey T.L."/>
            <person name="Bansal M."/>
            <person name="Baxter L."/>
            <person name="Beisel K.W."/>
            <person name="Bersano T."/>
            <person name="Bono H."/>
            <person name="Chalk A.M."/>
            <person name="Chiu K.P."/>
            <person name="Choudhary V."/>
            <person name="Christoffels A."/>
            <person name="Clutterbuck D.R."/>
            <person name="Crowe M.L."/>
            <person name="Dalla E."/>
            <person name="Dalrymple B.P."/>
            <person name="de Bono B."/>
            <person name="Della Gatta G."/>
            <person name="di Bernardo D."/>
            <person name="Down T."/>
            <person name="Engstrom P."/>
            <person name="Fagiolini M."/>
            <person name="Faulkner G."/>
            <person name="Fletcher C.F."/>
            <person name="Fukushima T."/>
            <person name="Furuno M."/>
            <person name="Futaki S."/>
            <person name="Gariboldi M."/>
            <person name="Georgii-Hemming P."/>
            <person name="Gingeras T.R."/>
            <person name="Gojobori T."/>
            <person name="Green R.E."/>
            <person name="Gustincich S."/>
            <person name="Harbers M."/>
            <person name="Hayashi Y."/>
            <person name="Hensch T.K."/>
            <person name="Hirokawa N."/>
            <person name="Hill D."/>
            <person name="Huminiecki L."/>
            <person name="Iacono M."/>
            <person name="Ikeo K."/>
            <person name="Iwama A."/>
            <person name="Ishikawa T."/>
            <person name="Jakt M."/>
            <person name="Kanapin A."/>
            <person name="Katoh M."/>
            <person name="Kawasawa Y."/>
            <person name="Kelso J."/>
            <person name="Kitamura H."/>
            <person name="Kitano H."/>
            <person name="Kollias G."/>
            <person name="Krishnan S.P."/>
            <person name="Kruger A."/>
            <person name="Kummerfeld S.K."/>
            <person name="Kurochkin I.V."/>
            <person name="Lareau L.F."/>
            <person name="Lazarevic D."/>
            <person name="Lipovich L."/>
            <person name="Liu J."/>
            <person name="Liuni S."/>
            <person name="McWilliam S."/>
            <person name="Madan Babu M."/>
            <person name="Madera M."/>
            <person name="Marchionni L."/>
            <person name="Matsuda H."/>
            <person name="Matsuzawa S."/>
            <person name="Miki H."/>
            <person name="Mignone F."/>
            <person name="Miyake S."/>
            <person name="Morris K."/>
            <person name="Mottagui-Tabar S."/>
            <person name="Mulder N."/>
            <person name="Nakano N."/>
            <person name="Nakauchi H."/>
            <person name="Ng P."/>
            <person name="Nilsson R."/>
            <person name="Nishiguchi S."/>
            <person name="Nishikawa S."/>
            <person name="Nori F."/>
            <person name="Ohara O."/>
            <person name="Okazaki Y."/>
            <person name="Orlando V."/>
            <person name="Pang K.C."/>
            <person name="Pavan W.J."/>
            <person name="Pavesi G."/>
            <person name="Pesole G."/>
            <person name="Petrovsky N."/>
            <person name="Piazza S."/>
            <person name="Reed J."/>
            <person name="Reid J.F."/>
            <person name="Ring B.Z."/>
            <person name="Ringwald M."/>
            <person name="Rost B."/>
            <person name="Ruan Y."/>
            <person name="Salzberg S.L."/>
            <person name="Sandelin A."/>
            <person name="Schneider C."/>
            <person name="Schoenbach C."/>
            <person name="Sekiguchi K."/>
            <person name="Semple C.A."/>
            <person name="Seno S."/>
            <person name="Sessa L."/>
            <person name="Sheng Y."/>
            <person name="Shibata Y."/>
            <person name="Shimada H."/>
            <person name="Shimada K."/>
            <person name="Silva D."/>
            <person name="Sinclair B."/>
            <person name="Sperling S."/>
            <person name="Stupka E."/>
            <person name="Sugiura K."/>
            <person name="Sultana R."/>
            <person name="Takenaka Y."/>
            <person name="Taki K."/>
            <person name="Tammoja K."/>
            <person name="Tan S.L."/>
            <person name="Tang S."/>
            <person name="Taylor M.S."/>
            <person name="Tegner J."/>
            <person name="Teichmann S.A."/>
            <person name="Ueda H.R."/>
            <person name="van Nimwegen E."/>
            <person name="Verardo R."/>
            <person name="Wei C.L."/>
            <person name="Yagi K."/>
            <person name="Yamanishi H."/>
            <person name="Zabarovsky E."/>
            <person name="Zhu S."/>
            <person name="Zimmer A."/>
            <person name="Hide W."/>
            <person name="Bult C."/>
            <person name="Grimmond S.M."/>
            <person name="Teasdale R.D."/>
            <person name="Liu E.T."/>
            <person name="Brusic V."/>
            <person name="Quackenbush J."/>
            <person name="Wahlestedt C."/>
            <person name="Mattick J.S."/>
            <person name="Hume D.A."/>
            <person name="Kai C."/>
            <person name="Sasaki D."/>
            <person name="Tomaru Y."/>
            <person name="Fukuda S."/>
            <person name="Kanamori-Katayama M."/>
            <person name="Suzuki M."/>
            <person name="Aoki J."/>
            <person name="Arakawa T."/>
            <person name="Iida J."/>
            <person name="Imamura K."/>
            <person name="Itoh M."/>
            <person name="Kato T."/>
            <person name="Kawaji H."/>
            <person name="Kawagashira N."/>
            <person name="Kawashima T."/>
            <person name="Kojima M."/>
            <person name="Kondo S."/>
            <person name="Konno H."/>
            <person name="Nakano K."/>
            <person name="Ninomiya N."/>
            <person name="Nishio T."/>
            <person name="Okada M."/>
            <person name="Plessy C."/>
            <person name="Shibata K."/>
            <person name="Shiraki T."/>
            <person name="Suzuki S."/>
            <person name="Tagami M."/>
            <person name="Waki K."/>
            <person name="Watahiki A."/>
            <person name="Okamura-Oho Y."/>
            <person name="Suzuki H."/>
            <person name="Kawai J."/>
            <person name="Hayashizaki Y."/>
        </authorList>
    </citation>
    <scope>NUCLEOTIDE SEQUENCE [LARGE SCALE MRNA]</scope>
    <source>
        <strain>C57BL/6J</strain>
        <tissue>Embryo</tissue>
        <tissue>Kidney</tissue>
    </source>
</reference>
<reference key="2">
    <citation type="journal article" date="2010" name="Cell">
        <title>A tissue-specific atlas of mouse protein phosphorylation and expression.</title>
        <authorList>
            <person name="Huttlin E.L."/>
            <person name="Jedrychowski M.P."/>
            <person name="Elias J.E."/>
            <person name="Goswami T."/>
            <person name="Rad R."/>
            <person name="Beausoleil S.A."/>
            <person name="Villen J."/>
            <person name="Haas W."/>
            <person name="Sowa M.E."/>
            <person name="Gygi S.P."/>
        </authorList>
    </citation>
    <scope>IDENTIFICATION BY MASS SPECTROMETRY [LARGE SCALE ANALYSIS]</scope>
    <source>
        <tissue>Brain</tissue>
        <tissue>Lung</tissue>
        <tissue>Pancreas</tissue>
        <tissue>Spleen</tissue>
    </source>
</reference>
<reference key="3">
    <citation type="journal article" date="2003" name="Proteins">
        <title>Structural modeling of ataxin-3 reveals distant homology to adaptins.</title>
        <authorList>
            <person name="Albrecht M."/>
            <person name="Hoffmann D."/>
            <person name="Evert B.O."/>
            <person name="Schmitt I."/>
            <person name="Wuellner U."/>
            <person name="Lengauer T."/>
        </authorList>
    </citation>
    <scope>3D-STRUCTURE MODELING</scope>
</reference>
<protein>
    <recommendedName>
        <fullName>Josephin-2</fullName>
        <ecNumber>3.4.19.12</ecNumber>
    </recommendedName>
    <alternativeName>
        <fullName>Josephin domain-containing protein 2</fullName>
    </alternativeName>
</protein>
<feature type="chain" id="PRO_0000053844" description="Josephin-2">
    <location>
        <begin position="1"/>
        <end position="188"/>
    </location>
</feature>
<feature type="domain" description="Josephin" evidence="2">
    <location>
        <begin position="11"/>
        <end position="188"/>
    </location>
</feature>
<feature type="active site" description="Nucleophile" evidence="2">
    <location>
        <position position="24"/>
    </location>
</feature>
<feature type="active site" description="Proton acceptor" evidence="2">
    <location>
        <position position="125"/>
    </location>
</feature>